<proteinExistence type="evidence at protein level"/>
<name>LYSJ_SULAC</name>
<keyword id="KW-0028">Amino-acid biosynthesis</keyword>
<keyword id="KW-0032">Aminotransferase</keyword>
<keyword id="KW-0055">Arginine biosynthesis</keyword>
<keyword id="KW-0963">Cytoplasm</keyword>
<keyword id="KW-0457">Lysine biosynthesis</keyword>
<keyword id="KW-0663">Pyridoxal phosphate</keyword>
<keyword id="KW-1185">Reference proteome</keyword>
<keyword id="KW-0808">Transferase</keyword>
<reference key="1">
    <citation type="journal article" date="2005" name="J. Bacteriol.">
        <title>The genome of Sulfolobus acidocaldarius, a model organism of the Crenarchaeota.</title>
        <authorList>
            <person name="Chen L."/>
            <person name="Bruegger K."/>
            <person name="Skovgaard M."/>
            <person name="Redder P."/>
            <person name="She Q."/>
            <person name="Torarinsson E."/>
            <person name="Greve B."/>
            <person name="Awayez M."/>
            <person name="Zibat A."/>
            <person name="Klenk H.-P."/>
            <person name="Garrett R.A."/>
        </authorList>
    </citation>
    <scope>NUCLEOTIDE SEQUENCE [LARGE SCALE GENOMIC DNA]</scope>
    <source>
        <strain>ATCC 33909 / DSM 639 / JCM 8929 / NBRC 15157 / NCIMB 11770</strain>
    </source>
</reference>
<reference key="2">
    <citation type="journal article" date="2013" name="Nat. Chem. Biol.">
        <title>Lysine and arginine biosyntheses mediated by a common carrier protein in Sulfolobus.</title>
        <authorList>
            <person name="Ouchi T."/>
            <person name="Tomita T."/>
            <person name="Horie A."/>
            <person name="Yoshida A."/>
            <person name="Takahashi K."/>
            <person name="Nishida H."/>
            <person name="Lassak K."/>
            <person name="Taka H."/>
            <person name="Mineki R."/>
            <person name="Fujimura T."/>
            <person name="Kosono S."/>
            <person name="Nishiyama C."/>
            <person name="Masui R."/>
            <person name="Kuramitsu S."/>
            <person name="Albers S.V."/>
            <person name="Kuzuyama T."/>
            <person name="Nishiyama M."/>
        </authorList>
    </citation>
    <scope>FUNCTION</scope>
    <scope>CATALYTIC ACTIVITY</scope>
    <scope>PATHWAY</scope>
</reference>
<organism>
    <name type="scientific">Sulfolobus acidocaldarius (strain ATCC 33909 / DSM 639 / JCM 8929 / NBRC 15157 / NCIMB 11770)</name>
    <dbReference type="NCBI Taxonomy" id="330779"/>
    <lineage>
        <taxon>Archaea</taxon>
        <taxon>Thermoproteota</taxon>
        <taxon>Thermoprotei</taxon>
        <taxon>Sulfolobales</taxon>
        <taxon>Sulfolobaceae</taxon>
        <taxon>Sulfolobus</taxon>
    </lineage>
</organism>
<dbReference type="EC" id="2.6.1.118" evidence="1 4"/>
<dbReference type="EC" id="2.6.1.124" evidence="1 4"/>
<dbReference type="EMBL" id="CP000077">
    <property type="protein sequence ID" value="AAY80131.1"/>
    <property type="molecule type" value="Genomic_DNA"/>
</dbReference>
<dbReference type="RefSeq" id="WP_011277633.1">
    <property type="nucleotide sequence ID" value="NC_007181.1"/>
</dbReference>
<dbReference type="SMR" id="Q4JAP8"/>
<dbReference type="STRING" id="330779.Saci_0755"/>
<dbReference type="GeneID" id="14551273"/>
<dbReference type="GeneID" id="78441102"/>
<dbReference type="KEGG" id="sai:Saci_0755"/>
<dbReference type="PATRIC" id="fig|330779.12.peg.724"/>
<dbReference type="eggNOG" id="arCOG00914">
    <property type="taxonomic scope" value="Archaea"/>
</dbReference>
<dbReference type="HOGENOM" id="CLU_016922_10_1_2"/>
<dbReference type="BioCyc" id="MetaCyc:MONOMER-18314"/>
<dbReference type="UniPathway" id="UPA00033">
    <property type="reaction ID" value="UER00038"/>
</dbReference>
<dbReference type="UniPathway" id="UPA00068"/>
<dbReference type="Proteomes" id="UP000001018">
    <property type="component" value="Chromosome"/>
</dbReference>
<dbReference type="GO" id="GO:0005737">
    <property type="term" value="C:cytoplasm"/>
    <property type="evidence" value="ECO:0007669"/>
    <property type="project" value="UniProtKB-SubCell"/>
</dbReference>
<dbReference type="GO" id="GO:0042802">
    <property type="term" value="F:identical protein binding"/>
    <property type="evidence" value="ECO:0007669"/>
    <property type="project" value="TreeGrafter"/>
</dbReference>
<dbReference type="GO" id="GO:0030170">
    <property type="term" value="F:pyridoxal phosphate binding"/>
    <property type="evidence" value="ECO:0007669"/>
    <property type="project" value="InterPro"/>
</dbReference>
<dbReference type="GO" id="GO:0008483">
    <property type="term" value="F:transaminase activity"/>
    <property type="evidence" value="ECO:0007669"/>
    <property type="project" value="UniProtKB-UniRule"/>
</dbReference>
<dbReference type="GO" id="GO:0042450">
    <property type="term" value="P:arginine biosynthetic process via ornithine"/>
    <property type="evidence" value="ECO:0007669"/>
    <property type="project" value="UniProtKB-UniRule"/>
</dbReference>
<dbReference type="GO" id="GO:0006526">
    <property type="term" value="P:L-arginine biosynthetic process"/>
    <property type="evidence" value="ECO:0007669"/>
    <property type="project" value="UniProtKB-UniPathway"/>
</dbReference>
<dbReference type="GO" id="GO:0019878">
    <property type="term" value="P:lysine biosynthetic process via aminoadipic acid"/>
    <property type="evidence" value="ECO:0007669"/>
    <property type="project" value="UniProtKB-UniRule"/>
</dbReference>
<dbReference type="CDD" id="cd00610">
    <property type="entry name" value="OAT_like"/>
    <property type="match status" value="1"/>
</dbReference>
<dbReference type="FunFam" id="3.40.640.10:FF:000004">
    <property type="entry name" value="Acetylornithine aminotransferase"/>
    <property type="match status" value="1"/>
</dbReference>
<dbReference type="Gene3D" id="3.90.1150.10">
    <property type="entry name" value="Aspartate Aminotransferase, domain 1"/>
    <property type="match status" value="1"/>
</dbReference>
<dbReference type="Gene3D" id="3.40.640.10">
    <property type="entry name" value="Type I PLP-dependent aspartate aminotransferase-like (Major domain)"/>
    <property type="match status" value="1"/>
</dbReference>
<dbReference type="HAMAP" id="MF_02084">
    <property type="entry name" value="LysJ_aminotrans_3"/>
    <property type="match status" value="1"/>
</dbReference>
<dbReference type="InterPro" id="IPR004636">
    <property type="entry name" value="AcOrn/SuccOrn_fam"/>
</dbReference>
<dbReference type="InterPro" id="IPR005814">
    <property type="entry name" value="Aminotrans_3"/>
</dbReference>
<dbReference type="InterPro" id="IPR049704">
    <property type="entry name" value="Aminotrans_3_PPA_site"/>
</dbReference>
<dbReference type="InterPro" id="IPR050103">
    <property type="entry name" value="Class-III_PLP-dep_AT"/>
</dbReference>
<dbReference type="InterPro" id="IPR053458">
    <property type="entry name" value="Class-III_PLP-Dep_Atrans_LysJ"/>
</dbReference>
<dbReference type="InterPro" id="IPR037537">
    <property type="entry name" value="LysJ"/>
</dbReference>
<dbReference type="InterPro" id="IPR015424">
    <property type="entry name" value="PyrdxlP-dep_Trfase"/>
</dbReference>
<dbReference type="InterPro" id="IPR015421">
    <property type="entry name" value="PyrdxlP-dep_Trfase_major"/>
</dbReference>
<dbReference type="InterPro" id="IPR015422">
    <property type="entry name" value="PyrdxlP-dep_Trfase_small"/>
</dbReference>
<dbReference type="NCBIfam" id="TIGR00707">
    <property type="entry name" value="argD"/>
    <property type="match status" value="1"/>
</dbReference>
<dbReference type="NCBIfam" id="NF045491">
    <property type="entry name" value="LysJ_Sulfobales"/>
    <property type="match status" value="1"/>
</dbReference>
<dbReference type="PANTHER" id="PTHR11986:SF79">
    <property type="entry name" value="ACETYLORNITHINE AMINOTRANSFERASE, MITOCHONDRIAL"/>
    <property type="match status" value="1"/>
</dbReference>
<dbReference type="PANTHER" id="PTHR11986">
    <property type="entry name" value="AMINOTRANSFERASE CLASS III"/>
    <property type="match status" value="1"/>
</dbReference>
<dbReference type="Pfam" id="PF00202">
    <property type="entry name" value="Aminotran_3"/>
    <property type="match status" value="1"/>
</dbReference>
<dbReference type="PIRSF" id="PIRSF000521">
    <property type="entry name" value="Transaminase_4ab_Lys_Orn"/>
    <property type="match status" value="1"/>
</dbReference>
<dbReference type="SUPFAM" id="SSF53383">
    <property type="entry name" value="PLP-dependent transferases"/>
    <property type="match status" value="1"/>
</dbReference>
<dbReference type="PROSITE" id="PS00600">
    <property type="entry name" value="AA_TRANSFER_CLASS_3"/>
    <property type="match status" value="1"/>
</dbReference>
<accession>Q4JAP8</accession>
<comment type="function">
    <text evidence="1 4">Involved in both the arginine and lysine biosynthetic pathways.</text>
</comment>
<comment type="catalytic activity">
    <reaction evidence="1 4">
        <text>[amino-group carrier protein]-C-terminal-gamma-(L-lysyl)-L-glutamate + 2-oxoglutarate = [amino-group carrier protein]-C-terminal-N-(1-carboxy-5-oxopentan-1-yl)-L-glutamine + L-glutamate</text>
        <dbReference type="Rhea" id="RHEA:41952"/>
        <dbReference type="Rhea" id="RHEA-COMP:9714"/>
        <dbReference type="Rhea" id="RHEA-COMP:9715"/>
        <dbReference type="ChEBI" id="CHEBI:16810"/>
        <dbReference type="ChEBI" id="CHEBI:29985"/>
        <dbReference type="ChEBI" id="CHEBI:78501"/>
        <dbReference type="ChEBI" id="CHEBI:78526"/>
        <dbReference type="EC" id="2.6.1.118"/>
    </reaction>
</comment>
<comment type="catalytic activity">
    <reaction evidence="1 4">
        <text>[amino-group carrier protein]-C-terminal-gamma-(L-ornithyl)-L-glutamate + 2-oxoglutarate = [amino-group carrier protein]-C-terminal-gamma-(L-glutamyl-5-semialdehyde)-L-glutamate + L-glutamate</text>
        <dbReference type="Rhea" id="RHEA:52672"/>
        <dbReference type="Rhea" id="RHEA-COMP:13327"/>
        <dbReference type="Rhea" id="RHEA-COMP:13328"/>
        <dbReference type="ChEBI" id="CHEBI:16810"/>
        <dbReference type="ChEBI" id="CHEBI:29985"/>
        <dbReference type="ChEBI" id="CHEBI:136761"/>
        <dbReference type="ChEBI" id="CHEBI:136763"/>
        <dbReference type="EC" id="2.6.1.124"/>
    </reaction>
</comment>
<comment type="cofactor">
    <cofactor evidence="1">
        <name>pyridoxal 5'-phosphate</name>
        <dbReference type="ChEBI" id="CHEBI:597326"/>
    </cofactor>
    <text evidence="1">Binds 1 pyridoxal phosphate per subunit.</text>
</comment>
<comment type="pathway">
    <text evidence="1 4">Amino-acid biosynthesis; L-lysine biosynthesis via AAA pathway; L-lysine from L-alpha-aminoadipate (Thermus route): step 4/5.</text>
</comment>
<comment type="pathway">
    <text evidence="1 4">Amino-acid biosynthesis; L-arginine biosynthesis.</text>
</comment>
<comment type="subunit">
    <text evidence="1">Homodimer.</text>
</comment>
<comment type="subcellular location">
    <subcellularLocation>
        <location evidence="1">Cytoplasm</location>
    </subcellularLocation>
</comment>
<comment type="similarity">
    <text evidence="1">Belongs to the class-III pyridoxal-phosphate-dependent aminotransferase family. LysJ subfamily.</text>
</comment>
<evidence type="ECO:0000255" key="1">
    <source>
        <dbReference type="HAMAP-Rule" id="MF_02084"/>
    </source>
</evidence>
<evidence type="ECO:0000303" key="2">
    <source>
    </source>
</evidence>
<evidence type="ECO:0000305" key="3"/>
<evidence type="ECO:0000305" key="4">
    <source>
    </source>
</evidence>
<evidence type="ECO:0000312" key="5">
    <source>
        <dbReference type="EMBL" id="AAY80131.1"/>
    </source>
</evidence>
<feature type="chain" id="PRO_0000439028" description="[LysW]-aminoadipate semialdehyde/glutamate semialdehyde transaminase">
    <location>
        <begin position="1"/>
        <end position="387"/>
    </location>
</feature>
<feature type="binding site" evidence="1">
    <location>
        <begin position="96"/>
        <end position="97"/>
    </location>
    <ligand>
        <name>pyridoxal 5'-phosphate</name>
        <dbReference type="ChEBI" id="CHEBI:597326"/>
    </ligand>
</feature>
<feature type="binding site" evidence="1">
    <location>
        <position position="123"/>
    </location>
    <ligand>
        <name>pyridoxal 5'-phosphate</name>
        <dbReference type="ChEBI" id="CHEBI:597326"/>
    </ligand>
</feature>
<feature type="binding site" evidence="1">
    <location>
        <position position="126"/>
    </location>
    <ligand>
        <name>substrate</name>
    </ligand>
</feature>
<feature type="binding site" evidence="1">
    <location>
        <begin position="207"/>
        <end position="210"/>
    </location>
    <ligand>
        <name>pyridoxal 5'-phosphate</name>
        <dbReference type="ChEBI" id="CHEBI:597326"/>
    </ligand>
</feature>
<feature type="binding site" evidence="1">
    <location>
        <position position="264"/>
    </location>
    <ligand>
        <name>substrate</name>
    </ligand>
</feature>
<feature type="binding site" evidence="1">
    <location>
        <position position="265"/>
    </location>
    <ligand>
        <name>pyridoxal 5'-phosphate</name>
        <dbReference type="ChEBI" id="CHEBI:597326"/>
    </ligand>
</feature>
<feature type="modified residue" description="N6-(pyridoxal phosphate)lysine" evidence="1">
    <location>
        <position position="236"/>
    </location>
</feature>
<sequence>MKLIQLYGDRGLTIVKGEAQYVWDIEGRRYLDFHTGIGVAFLGHRNPIILEYLKNQLENISILSTSFSTPIKDEMLQALDKVKPDKMDNAMLLNSGTEAVEAALKTARKITGRKKIIAFKNAFHGRTAGSLSVTWNKKYREPFEPLVGPVEFLTFNNIEDLSKIDNETAAVIVEPIQGESGVIPANIEFMKALKEKTENTGSLLIFDEIQTGFGRTGKLWAYKHYNIVPDILTAGKAIGGGFPVSVVFLPDHIANKLEEGDHGSTYGGNPMAMAAVTAACKVIEKENVVEQANQKGQQFSNILVKNLADLKVVREVRGKGLMIGIDIRFQPGQVLKYLQEKGILAVKAGSTVIRFLPSYLITYENMEEASNVLREGLLKIENKAVSS</sequence>
<gene>
    <name evidence="1 2" type="primary">lysJ</name>
    <name evidence="5" type="synonym">argD</name>
    <name evidence="5" type="ordered locus">Saci_0755</name>
</gene>
<protein>
    <recommendedName>
        <fullName evidence="1 3">[LysW]-aminoadipate semialdehyde/glutamate semialdehyde transaminase</fullName>
        <ecNumber evidence="1 4">2.6.1.118</ecNumber>
        <ecNumber evidence="1 4">2.6.1.124</ecNumber>
    </recommendedName>
</protein>